<dbReference type="EMBL" id="AF548110">
    <property type="protein sequence ID" value="AAN59913.1"/>
    <property type="molecule type" value="mRNA"/>
</dbReference>
<dbReference type="EMBL" id="AF548111">
    <property type="protein sequence ID" value="AAN59914.1"/>
    <property type="molecule type" value="mRNA"/>
</dbReference>
<dbReference type="FunCoup" id="Q8BGX4">
    <property type="interactions" value="1"/>
</dbReference>
<dbReference type="STRING" id="10090.ENSMUSP00000062217"/>
<dbReference type="PaxDb" id="10090-ENSMUSP00000062217"/>
<dbReference type="Ensembl" id="ENSMUST00000224813.2">
    <property type="protein sequence ID" value="ENSMUSP00000153579.2"/>
    <property type="gene ID" value="ENSMUSG00000047094.10"/>
</dbReference>
<dbReference type="UCSC" id="uc007qec.1">
    <property type="organism name" value="mouse"/>
</dbReference>
<dbReference type="AGR" id="MGI:2658851"/>
<dbReference type="MGI" id="MGI:2658851">
    <property type="gene designation" value="Ofcc1"/>
</dbReference>
<dbReference type="VEuPathDB" id="HostDB:ENSMUSG00000047094"/>
<dbReference type="eggNOG" id="ENOG502QRVX">
    <property type="taxonomic scope" value="Eukaryota"/>
</dbReference>
<dbReference type="GeneTree" id="ENSGT00940000163681"/>
<dbReference type="InParanoid" id="Q8BGX4"/>
<dbReference type="OrthoDB" id="347244at2759"/>
<dbReference type="PhylomeDB" id="Q8BGX4"/>
<dbReference type="ChiTaRS" id="Ofcc1">
    <property type="organism name" value="mouse"/>
</dbReference>
<dbReference type="PRO" id="PR:Q8BGX4"/>
<dbReference type="Proteomes" id="UP000000589">
    <property type="component" value="Chromosome 13"/>
</dbReference>
<dbReference type="RNAct" id="Q8BGX4">
    <property type="molecule type" value="protein"/>
</dbReference>
<dbReference type="Bgee" id="ENSMUSG00000047094">
    <property type="expression patterns" value="Expressed in cartilage element and 64 other cell types or tissues"/>
</dbReference>
<dbReference type="ExpressionAtlas" id="Q8BGX4">
    <property type="expression patterns" value="baseline and differential"/>
</dbReference>
<dbReference type="GO" id="GO:0005737">
    <property type="term" value="C:cytoplasm"/>
    <property type="evidence" value="ECO:0000314"/>
    <property type="project" value="MGI"/>
</dbReference>
<dbReference type="GO" id="GO:0005829">
    <property type="term" value="C:cytosol"/>
    <property type="evidence" value="ECO:0000314"/>
    <property type="project" value="MGI"/>
</dbReference>
<dbReference type="GO" id="GO:0005783">
    <property type="term" value="C:endoplasmic reticulum"/>
    <property type="evidence" value="ECO:0000314"/>
    <property type="project" value="MGI"/>
</dbReference>
<dbReference type="GO" id="GO:0015630">
    <property type="term" value="C:microtubule cytoskeleton"/>
    <property type="evidence" value="ECO:0000314"/>
    <property type="project" value="MGI"/>
</dbReference>
<dbReference type="GO" id="GO:0048471">
    <property type="term" value="C:perinuclear region of cytoplasm"/>
    <property type="evidence" value="ECO:0000314"/>
    <property type="project" value="MGI"/>
</dbReference>
<dbReference type="InterPro" id="IPR031390">
    <property type="entry name" value="OFCC1"/>
</dbReference>
<dbReference type="PANTHER" id="PTHR33862">
    <property type="entry name" value="OROFACIAL CLEFT 1 CANDIDATE GENE 1 PROTEIN"/>
    <property type="match status" value="1"/>
</dbReference>
<dbReference type="PANTHER" id="PTHR33862:SF3">
    <property type="entry name" value="OROFACIAL CLEFT 1 CANDIDATE GENE 1 PROTEIN"/>
    <property type="match status" value="1"/>
</dbReference>
<dbReference type="Pfam" id="PF15680">
    <property type="entry name" value="OFCC1"/>
    <property type="match status" value="1"/>
</dbReference>
<organism>
    <name type="scientific">Mus musculus</name>
    <name type="common">Mouse</name>
    <dbReference type="NCBI Taxonomy" id="10090"/>
    <lineage>
        <taxon>Eukaryota</taxon>
        <taxon>Metazoa</taxon>
        <taxon>Chordata</taxon>
        <taxon>Craniata</taxon>
        <taxon>Vertebrata</taxon>
        <taxon>Euteleostomi</taxon>
        <taxon>Mammalia</taxon>
        <taxon>Eutheria</taxon>
        <taxon>Euarchontoglires</taxon>
        <taxon>Glires</taxon>
        <taxon>Rodentia</taxon>
        <taxon>Myomorpha</taxon>
        <taxon>Muroidea</taxon>
        <taxon>Muridae</taxon>
        <taxon>Murinae</taxon>
        <taxon>Mus</taxon>
        <taxon>Mus</taxon>
    </lineage>
</organism>
<sequence length="166" mass="18233">MDKEKFQQKAVKQTKQKKSTSAEFLMVKEYTDATEGAGNPGFNMSSPELPAHQTPQEKVVRHDMLDHTLATHQQKSRLPASAGPKGVTSVLIVLTLAALLIRPGCPEREPGIPLKRACTASVEDLFGARVGGDAAEDLCTHWVQVTHSFVGEGYERMNSLFFGRLR</sequence>
<proteinExistence type="evidence at transcript level"/>
<keyword id="KW-1185">Reference proteome</keyword>
<reference key="1">
    <citation type="journal article" date="2004" name="Cytogenet. Genome Res.">
        <title>Mapping of three translocation breakpoints associated with orofacial clefting within 6p24 and identification of new transcripts within the region.</title>
        <authorList>
            <person name="Davies S.J."/>
            <person name="Wise C."/>
            <person name="Venkatesh B."/>
            <person name="Mirza G."/>
            <person name="Jefferson A."/>
            <person name="Volpi E.V."/>
            <person name="Ragoussis J."/>
        </authorList>
    </citation>
    <scope>NUCLEOTIDE SEQUENCE [MRNA]</scope>
    <source>
        <strain>Swiss Webster / NIH</strain>
        <tissue>Embryo</tissue>
    </source>
</reference>
<name>OFCC1_MOUSE</name>
<accession>Q8BGX4</accession>
<gene>
    <name type="primary">Ofcc1</name>
</gene>
<feature type="chain" id="PRO_0000337139" description="Orofacial cleft 1 candidate gene 1 protein homolog">
    <location>
        <begin position="1"/>
        <end position="166"/>
    </location>
</feature>
<feature type="region of interest" description="Disordered" evidence="1">
    <location>
        <begin position="1"/>
        <end position="22"/>
    </location>
</feature>
<evidence type="ECO:0000256" key="1">
    <source>
        <dbReference type="SAM" id="MobiDB-lite"/>
    </source>
</evidence>
<protein>
    <recommendedName>
        <fullName>Orofacial cleft 1 candidate gene 1 protein homolog</fullName>
    </recommendedName>
    <alternativeName>
        <fullName>Orofacial clefting chromosomal breakpoint region candidate 1 protein homolog</fullName>
    </alternativeName>
</protein>